<evidence type="ECO:0000255" key="1">
    <source>
        <dbReference type="PROSITE-ProRule" id="PRU00798"/>
    </source>
</evidence>
<sequence length="54" mass="5837">TATVDCSDYPKPACTLEYMPFCGSDSKTYSNKCNFCNAVVDSNGTLTLSHFGKC</sequence>
<reference key="1">
    <citation type="journal article" date="1993" name="J. Protein Chem.">
        <title>Amino acid sequences of ovomucoid third domains from 27 additional species of birds.</title>
        <authorList>
            <person name="Apostol I."/>
            <person name="Giletto A."/>
            <person name="Komiyama T."/>
            <person name="Zhang W."/>
            <person name="Laskowski M. Jr."/>
        </authorList>
    </citation>
    <scope>PROTEIN SEQUENCE</scope>
</reference>
<protein>
    <recommendedName>
        <fullName>Ovomucoid</fullName>
    </recommendedName>
</protein>
<organism>
    <name type="scientific">Grus japonensis</name>
    <name type="common">Japanese crane</name>
    <name type="synonym">Red-crowned crane</name>
    <dbReference type="NCBI Taxonomy" id="30415"/>
    <lineage>
        <taxon>Eukaryota</taxon>
        <taxon>Metazoa</taxon>
        <taxon>Chordata</taxon>
        <taxon>Craniata</taxon>
        <taxon>Vertebrata</taxon>
        <taxon>Euteleostomi</taxon>
        <taxon>Archelosauria</taxon>
        <taxon>Archosauria</taxon>
        <taxon>Dinosauria</taxon>
        <taxon>Saurischia</taxon>
        <taxon>Theropoda</taxon>
        <taxon>Coelurosauria</taxon>
        <taxon>Aves</taxon>
        <taxon>Neognathae</taxon>
        <taxon>Neoaves</taxon>
        <taxon>Gruiformes</taxon>
        <taxon>Gruidae</taxon>
        <taxon>Grus</taxon>
    </lineage>
</organism>
<dbReference type="PIR" id="I61588">
    <property type="entry name" value="I61588"/>
</dbReference>
<dbReference type="SMR" id="P68380"/>
<dbReference type="GO" id="GO:0005576">
    <property type="term" value="C:extracellular region"/>
    <property type="evidence" value="ECO:0007669"/>
    <property type="project" value="UniProtKB-SubCell"/>
</dbReference>
<dbReference type="GO" id="GO:0004867">
    <property type="term" value="F:serine-type endopeptidase inhibitor activity"/>
    <property type="evidence" value="ECO:0007669"/>
    <property type="project" value="UniProtKB-KW"/>
</dbReference>
<dbReference type="CDD" id="cd00104">
    <property type="entry name" value="KAZAL_FS"/>
    <property type="match status" value="1"/>
</dbReference>
<dbReference type="FunFam" id="3.30.60.30:FF:000037">
    <property type="entry name" value="Ovomucoid"/>
    <property type="match status" value="1"/>
</dbReference>
<dbReference type="Gene3D" id="3.30.60.30">
    <property type="match status" value="1"/>
</dbReference>
<dbReference type="InterPro" id="IPR051597">
    <property type="entry name" value="Bifunctional_prot_inhibitor"/>
</dbReference>
<dbReference type="InterPro" id="IPR002350">
    <property type="entry name" value="Kazal_dom"/>
</dbReference>
<dbReference type="InterPro" id="IPR036058">
    <property type="entry name" value="Kazal_dom_sf"/>
</dbReference>
<dbReference type="InterPro" id="IPR001239">
    <property type="entry name" value="Prot_inh_Kazal-m"/>
</dbReference>
<dbReference type="PANTHER" id="PTHR47729:SF1">
    <property type="entry name" value="OVOMUCOID-LIKE-RELATED"/>
    <property type="match status" value="1"/>
</dbReference>
<dbReference type="PANTHER" id="PTHR47729">
    <property type="entry name" value="SERINE PEPTIDASE INHIBITOR, KAZAL TYPE 2, TANDEM DUPLICATE 1-RELATED"/>
    <property type="match status" value="1"/>
</dbReference>
<dbReference type="Pfam" id="PF00050">
    <property type="entry name" value="Kazal_1"/>
    <property type="match status" value="1"/>
</dbReference>
<dbReference type="PRINTS" id="PR00290">
    <property type="entry name" value="KAZALINHBTR"/>
</dbReference>
<dbReference type="SMART" id="SM00280">
    <property type="entry name" value="KAZAL"/>
    <property type="match status" value="1"/>
</dbReference>
<dbReference type="SUPFAM" id="SSF100895">
    <property type="entry name" value="Kazal-type serine protease inhibitors"/>
    <property type="match status" value="1"/>
</dbReference>
<dbReference type="PROSITE" id="PS00282">
    <property type="entry name" value="KAZAL_1"/>
    <property type="match status" value="1"/>
</dbReference>
<dbReference type="PROSITE" id="PS51465">
    <property type="entry name" value="KAZAL_2"/>
    <property type="match status" value="1"/>
</dbReference>
<proteinExistence type="evidence at protein level"/>
<feature type="chain" id="PRO_0000073119" description="Ovomucoid">
    <location>
        <begin position="1" status="less than"/>
        <end position="54" status="greater than"/>
    </location>
</feature>
<feature type="domain" description="Kazal-like" evidence="1">
    <location>
        <begin position="4"/>
        <end position="54"/>
    </location>
</feature>
<feature type="site" description="Reactive bond 3">
    <location>
        <begin position="16"/>
        <end position="17"/>
    </location>
</feature>
<feature type="glycosylation site" description="N-linked (GlcNAc...) asparagine">
    <location>
        <position position="43"/>
    </location>
</feature>
<feature type="disulfide bond">
    <location>
        <begin position="6"/>
        <end position="36"/>
    </location>
</feature>
<feature type="disulfide bond">
    <location>
        <begin position="14"/>
        <end position="33"/>
    </location>
</feature>
<feature type="disulfide bond">
    <location>
        <begin position="22"/>
        <end position="54"/>
    </location>
</feature>
<feature type="non-terminal residue">
    <location>
        <position position="1"/>
    </location>
</feature>
<feature type="non-terminal residue">
    <location>
        <position position="54"/>
    </location>
</feature>
<name>IOVO_GRUJA</name>
<keyword id="KW-0903">Direct protein sequencing</keyword>
<keyword id="KW-1015">Disulfide bond</keyword>
<keyword id="KW-0325">Glycoprotein</keyword>
<keyword id="KW-0646">Protease inhibitor</keyword>
<keyword id="KW-0677">Repeat</keyword>
<keyword id="KW-0964">Secreted</keyword>
<keyword id="KW-0722">Serine protease inhibitor</keyword>
<comment type="subcellular location">
    <subcellularLocation>
        <location>Secreted</location>
    </subcellularLocation>
</comment>
<comment type="domain">
    <text>Avian ovomucoid consists of three homologous, tandem Kazal family inhibitory domains.</text>
</comment>
<accession>P68380</accession>
<accession>P05612</accession>